<dbReference type="EC" id="4.1.1.104" evidence="2"/>
<dbReference type="EMBL" id="AM260479">
    <property type="protein sequence ID" value="CAJ92692.1"/>
    <property type="molecule type" value="Genomic_DNA"/>
</dbReference>
<dbReference type="RefSeq" id="WP_010810012.1">
    <property type="nucleotide sequence ID" value="NZ_CP039287.1"/>
</dbReference>
<dbReference type="SMR" id="Q0KBC9"/>
<dbReference type="STRING" id="381666.H16_A1560"/>
<dbReference type="KEGG" id="reh:H16_A1560"/>
<dbReference type="PATRIC" id="fig|381666.6.peg.1945"/>
<dbReference type="eggNOG" id="COG0235">
    <property type="taxonomic scope" value="Bacteria"/>
</dbReference>
<dbReference type="HOGENOM" id="CLU_006033_3_2_4"/>
<dbReference type="OrthoDB" id="5500703at2"/>
<dbReference type="BRENDA" id="4.1.1.104">
    <property type="organism ID" value="231"/>
</dbReference>
<dbReference type="Proteomes" id="UP000008210">
    <property type="component" value="Chromosome 1"/>
</dbReference>
<dbReference type="GO" id="GO:0005829">
    <property type="term" value="C:cytosol"/>
    <property type="evidence" value="ECO:0007669"/>
    <property type="project" value="TreeGrafter"/>
</dbReference>
<dbReference type="GO" id="GO:0016832">
    <property type="term" value="F:aldehyde-lyase activity"/>
    <property type="evidence" value="ECO:0007669"/>
    <property type="project" value="InterPro"/>
</dbReference>
<dbReference type="GO" id="GO:0046872">
    <property type="term" value="F:metal ion binding"/>
    <property type="evidence" value="ECO:0007669"/>
    <property type="project" value="UniProtKB-KW"/>
</dbReference>
<dbReference type="GO" id="GO:0019323">
    <property type="term" value="P:pentose catabolic process"/>
    <property type="evidence" value="ECO:0007669"/>
    <property type="project" value="InterPro"/>
</dbReference>
<dbReference type="Gene3D" id="3.40.225.10">
    <property type="entry name" value="Class II aldolase/adducin N-terminal domain"/>
    <property type="match status" value="1"/>
</dbReference>
<dbReference type="InterPro" id="IPR050197">
    <property type="entry name" value="Aldolase_class_II_sugar_metab"/>
</dbReference>
<dbReference type="InterPro" id="IPR001303">
    <property type="entry name" value="Aldolase_II/adducin_N"/>
</dbReference>
<dbReference type="InterPro" id="IPR036409">
    <property type="entry name" value="Aldolase_II/adducin_N_sf"/>
</dbReference>
<dbReference type="InterPro" id="IPR050013">
    <property type="entry name" value="OtnC"/>
</dbReference>
<dbReference type="NCBIfam" id="NF043034">
    <property type="entry name" value="OxoTetrPhDc"/>
    <property type="match status" value="1"/>
</dbReference>
<dbReference type="NCBIfam" id="NF006000">
    <property type="entry name" value="PRK08130.1"/>
    <property type="match status" value="1"/>
</dbReference>
<dbReference type="PANTHER" id="PTHR22789:SF0">
    <property type="entry name" value="3-OXO-TETRONATE 4-PHOSPHATE DECARBOXYLASE-RELATED"/>
    <property type="match status" value="1"/>
</dbReference>
<dbReference type="PANTHER" id="PTHR22789">
    <property type="entry name" value="FUCULOSE PHOSPHATE ALDOLASE"/>
    <property type="match status" value="1"/>
</dbReference>
<dbReference type="Pfam" id="PF00596">
    <property type="entry name" value="Aldolase_II"/>
    <property type="match status" value="1"/>
</dbReference>
<dbReference type="SMART" id="SM01007">
    <property type="entry name" value="Aldolase_II"/>
    <property type="match status" value="1"/>
</dbReference>
<dbReference type="SUPFAM" id="SSF53639">
    <property type="entry name" value="AraD/HMP-PK domain-like"/>
    <property type="match status" value="1"/>
</dbReference>
<feature type="chain" id="PRO_0000439750" description="3-oxo-tetronate 4-phosphate decarboxylase">
    <location>
        <begin position="1"/>
        <end position="217"/>
    </location>
</feature>
<feature type="active site" description="Proton donor" evidence="1">
    <location>
        <position position="120"/>
    </location>
</feature>
<feature type="binding site" evidence="1">
    <location>
        <position position="93"/>
    </location>
    <ligand>
        <name>Zn(2+)</name>
        <dbReference type="ChEBI" id="CHEBI:29105"/>
    </ligand>
</feature>
<feature type="binding site" evidence="1">
    <location>
        <position position="95"/>
    </location>
    <ligand>
        <name>Zn(2+)</name>
        <dbReference type="ChEBI" id="CHEBI:29105"/>
    </ligand>
</feature>
<organism>
    <name type="scientific">Cupriavidus necator (strain ATCC 17699 / DSM 428 / KCTC 22496 / NCIMB 10442 / H16 / Stanier 337)</name>
    <name type="common">Ralstonia eutropha</name>
    <dbReference type="NCBI Taxonomy" id="381666"/>
    <lineage>
        <taxon>Bacteria</taxon>
        <taxon>Pseudomonadati</taxon>
        <taxon>Pseudomonadota</taxon>
        <taxon>Betaproteobacteria</taxon>
        <taxon>Burkholderiales</taxon>
        <taxon>Burkholderiaceae</taxon>
        <taxon>Cupriavidus</taxon>
    </lineage>
</organism>
<accession>Q0KBC9</accession>
<evidence type="ECO:0000250" key="1">
    <source>
        <dbReference type="UniProtKB" id="P0AB87"/>
    </source>
</evidence>
<evidence type="ECO:0000269" key="2">
    <source>
    </source>
</evidence>
<evidence type="ECO:0000303" key="3">
    <source>
    </source>
</evidence>
<evidence type="ECO:0000305" key="4"/>
<evidence type="ECO:0000312" key="5">
    <source>
        <dbReference type="EMBL" id="CAJ92692.1"/>
    </source>
</evidence>
<comment type="function">
    <text evidence="2">Catalyzes the decarboxylation of 3-oxo-tetronate 4-phosphate to dihydroxyacetone phosphate (DHAP) and CO(2).</text>
</comment>
<comment type="catalytic activity">
    <reaction evidence="2">
        <text>3-dehydro-4-O-phospho-D-erythronate + H(+) = dihydroxyacetone phosphate + CO2</text>
        <dbReference type="Rhea" id="RHEA:52416"/>
        <dbReference type="ChEBI" id="CHEBI:15378"/>
        <dbReference type="ChEBI" id="CHEBI:16526"/>
        <dbReference type="ChEBI" id="CHEBI:57642"/>
        <dbReference type="ChEBI" id="CHEBI:136593"/>
        <dbReference type="EC" id="4.1.1.104"/>
    </reaction>
</comment>
<comment type="catalytic activity">
    <reaction evidence="2">
        <text>3-dehydro-4-O-phospho-L-erythronate + H(+) = dihydroxyacetone phosphate + CO2</text>
        <dbReference type="Rhea" id="RHEA:52404"/>
        <dbReference type="ChEBI" id="CHEBI:15378"/>
        <dbReference type="ChEBI" id="CHEBI:16526"/>
        <dbReference type="ChEBI" id="CHEBI:57642"/>
        <dbReference type="ChEBI" id="CHEBI:136592"/>
        <dbReference type="EC" id="4.1.1.104"/>
    </reaction>
</comment>
<comment type="cofactor">
    <cofactor evidence="1">
        <name>Zn(2+)</name>
        <dbReference type="ChEBI" id="CHEBI:29105"/>
    </cofactor>
    <text evidence="1">Binds 1 zinc ion per subunit.</text>
</comment>
<comment type="disruption phenotype">
    <text evidence="2">Deletion mutant is unable to use L-threonate or D-erythronate as a carbon source.</text>
</comment>
<comment type="similarity">
    <text evidence="4">Belongs to the aldolase class II family. AraD/FucA subfamily.</text>
</comment>
<name>OTNC_CUPNH</name>
<keyword id="KW-0119">Carbohydrate metabolism</keyword>
<keyword id="KW-0456">Lyase</keyword>
<keyword id="KW-0479">Metal-binding</keyword>
<keyword id="KW-1185">Reference proteome</keyword>
<keyword id="KW-0862">Zinc</keyword>
<protein>
    <recommendedName>
        <fullName evidence="3">3-oxo-tetronate 4-phosphate decarboxylase</fullName>
        <ecNumber evidence="2">4.1.1.104</ecNumber>
    </recommendedName>
</protein>
<proteinExistence type="evidence at protein level"/>
<gene>
    <name evidence="3" type="primary">otnC</name>
    <name evidence="5" type="ordered locus">H16_A1560</name>
</gene>
<reference key="1">
    <citation type="journal article" date="2006" name="Nat. Biotechnol.">
        <title>Genome sequence of the bioplastic-producing 'Knallgas' bacterium Ralstonia eutropha H16.</title>
        <authorList>
            <person name="Pohlmann A."/>
            <person name="Fricke W.F."/>
            <person name="Reinecke F."/>
            <person name="Kusian B."/>
            <person name="Liesegang H."/>
            <person name="Cramm R."/>
            <person name="Eitinger T."/>
            <person name="Ewering C."/>
            <person name="Poetter M."/>
            <person name="Schwartz E."/>
            <person name="Strittmatter A."/>
            <person name="Voss I."/>
            <person name="Gottschalk G."/>
            <person name="Steinbuechel A."/>
            <person name="Friedrich B."/>
            <person name="Bowien B."/>
        </authorList>
    </citation>
    <scope>NUCLEOTIDE SEQUENCE [LARGE SCALE GENOMIC DNA]</scope>
    <source>
        <strain>ATCC 17699 / DSM 428 / KCTC 22496 / NCIMB 10442 / H16 / Stanier 337</strain>
    </source>
</reference>
<reference key="2">
    <citation type="journal article" date="2016" name="Proc. Natl. Acad. Sci. U.S.A.">
        <title>Assignment of function to a domain of unknown function: DUF1537 is a new kinase family in catabolic pathways for acid sugars.</title>
        <authorList>
            <person name="Zhang X."/>
            <person name="Carter M.S."/>
            <person name="Vetting M.W."/>
            <person name="San Francisco B."/>
            <person name="Zhao S."/>
            <person name="Al-Obaidi N.F."/>
            <person name="Solbiati J.O."/>
            <person name="Thiaville J.J."/>
            <person name="de Crecy-Lagard V."/>
            <person name="Jacobson M.P."/>
            <person name="Almo S.C."/>
            <person name="Gerlt J.A."/>
        </authorList>
    </citation>
    <scope>FUNCTION</scope>
    <scope>CATALYTIC ACTIVITY</scope>
    <scope>DISRUPTION PHENOTYPE</scope>
    <source>
        <strain>ATCC 17699 / DSM 428 / KCTC 22496 / NCIMB 10442 / H16 / Stanier 337</strain>
    </source>
</reference>
<sequence length="217" mass="23584">MSTESKLREEICRIGASLYQRGYTVGSAGNISARLDDGWLITPTDACLGMMDPAAVAKVATDGSWVSGDKPSKTLMLHRAIYDNNREAHAVVHTHSTHLVALTLAGVWQPDDVLPPLTPYYVMKVGHIPLIPYHRPGDPAVAARVATLAAQVRGVLLERLGPVVWESSVSRAAFALEELEETAKLWMTMKDTPGFAARAALPDGALTELRDAFQARW</sequence>